<keyword id="KW-0131">Cell cycle</keyword>
<keyword id="KW-0132">Cell division</keyword>
<keyword id="KW-0159">Chromosome partition</keyword>
<keyword id="KW-0963">Cytoplasm</keyword>
<keyword id="KW-0229">DNA integration</keyword>
<keyword id="KW-0233">DNA recombination</keyword>
<keyword id="KW-0238">DNA-binding</keyword>
<gene>
    <name evidence="1" type="primary">xerC</name>
    <name type="ordered locus">USA300HOU_1183</name>
</gene>
<protein>
    <recommendedName>
        <fullName evidence="1">Tyrosine recombinase XerC</fullName>
    </recommendedName>
</protein>
<sequence>MNHIQDAFLNTLKVERNFSEHTLKSYQDDLIQFNQFLEQEHLELNTFEYRDARNYLSYLYSNHLKRTSVSRKISTLRTFYEYWMTLDENIINPFVQLVHPKKEKYLPQFFYEEEMEALFKTVEEDTSKNLRDRVILELLYATGIRVSELVNIKKQDIDFYANGVTVLGKGSKERFVPFGAYCRQSIENYLEHFKPIQSCNHDFLIVNMKGEAITERGVRYVLNDIVKRTAGVSEIHPHKLRHTFATHLLNQGADLRTVQSLLGHVNLSTTGKYTHVSNQQLRKVYLNAHPRAKKENET</sequence>
<evidence type="ECO:0000255" key="1">
    <source>
        <dbReference type="HAMAP-Rule" id="MF_01808"/>
    </source>
</evidence>
<evidence type="ECO:0000255" key="2">
    <source>
        <dbReference type="PROSITE-ProRule" id="PRU01246"/>
    </source>
</evidence>
<evidence type="ECO:0000255" key="3">
    <source>
        <dbReference type="PROSITE-ProRule" id="PRU01248"/>
    </source>
</evidence>
<organism>
    <name type="scientific">Staphylococcus aureus (strain USA300 / TCH1516)</name>
    <dbReference type="NCBI Taxonomy" id="451516"/>
    <lineage>
        <taxon>Bacteria</taxon>
        <taxon>Bacillati</taxon>
        <taxon>Bacillota</taxon>
        <taxon>Bacilli</taxon>
        <taxon>Bacillales</taxon>
        <taxon>Staphylococcaceae</taxon>
        <taxon>Staphylococcus</taxon>
    </lineage>
</organism>
<accession>A8Z3T2</accession>
<comment type="function">
    <text evidence="1">Site-specific tyrosine recombinase, which acts by catalyzing the cutting and rejoining of the recombining DNA molecules. The XerC-XerD complex is essential to convert dimers of the bacterial chromosome into monomers to permit their segregation at cell division. It also contributes to the segregational stability of plasmids.</text>
</comment>
<comment type="subunit">
    <text evidence="1">Forms a cyclic heterotetrameric complex composed of two molecules of XerC and two molecules of XerD.</text>
</comment>
<comment type="subcellular location">
    <subcellularLocation>
        <location evidence="1">Cytoplasm</location>
    </subcellularLocation>
</comment>
<comment type="similarity">
    <text evidence="1">Belongs to the 'phage' integrase family. XerC subfamily.</text>
</comment>
<proteinExistence type="inferred from homology"/>
<feature type="chain" id="PRO_1000088246" description="Tyrosine recombinase XerC">
    <location>
        <begin position="1"/>
        <end position="298"/>
    </location>
</feature>
<feature type="domain" description="Core-binding (CB)" evidence="3">
    <location>
        <begin position="1"/>
        <end position="84"/>
    </location>
</feature>
<feature type="domain" description="Tyr recombinase" evidence="2">
    <location>
        <begin position="105"/>
        <end position="286"/>
    </location>
</feature>
<feature type="active site" evidence="1">
    <location>
        <position position="145"/>
    </location>
</feature>
<feature type="active site" evidence="1">
    <location>
        <position position="169"/>
    </location>
</feature>
<feature type="active site" evidence="1">
    <location>
        <position position="238"/>
    </location>
</feature>
<feature type="active site" evidence="1">
    <location>
        <position position="241"/>
    </location>
</feature>
<feature type="active site" evidence="1">
    <location>
        <position position="264"/>
    </location>
</feature>
<feature type="active site" description="O-(3'-phospho-DNA)-tyrosine intermediate" evidence="1">
    <location>
        <position position="273"/>
    </location>
</feature>
<reference key="1">
    <citation type="journal article" date="2007" name="BMC Microbiol.">
        <title>Subtle genetic changes enhance virulence of methicillin resistant and sensitive Staphylococcus aureus.</title>
        <authorList>
            <person name="Highlander S.K."/>
            <person name="Hulten K.G."/>
            <person name="Qin X."/>
            <person name="Jiang H."/>
            <person name="Yerrapragada S."/>
            <person name="Mason E.O. Jr."/>
            <person name="Shang Y."/>
            <person name="Williams T.M."/>
            <person name="Fortunov R.M."/>
            <person name="Liu Y."/>
            <person name="Igboeli O."/>
            <person name="Petrosino J."/>
            <person name="Tirumalai M."/>
            <person name="Uzman A."/>
            <person name="Fox G.E."/>
            <person name="Cardenas A.M."/>
            <person name="Muzny D.M."/>
            <person name="Hemphill L."/>
            <person name="Ding Y."/>
            <person name="Dugan S."/>
            <person name="Blyth P.R."/>
            <person name="Buhay C.J."/>
            <person name="Dinh H.H."/>
            <person name="Hawes A.C."/>
            <person name="Holder M."/>
            <person name="Kovar C.L."/>
            <person name="Lee S.L."/>
            <person name="Liu W."/>
            <person name="Nazareth L.V."/>
            <person name="Wang Q."/>
            <person name="Zhou J."/>
            <person name="Kaplan S.L."/>
            <person name="Weinstock G.M."/>
        </authorList>
    </citation>
    <scope>NUCLEOTIDE SEQUENCE [LARGE SCALE GENOMIC DNA]</scope>
    <source>
        <strain>USA300 / TCH1516</strain>
    </source>
</reference>
<name>XERC_STAAT</name>
<dbReference type="EMBL" id="CP000730">
    <property type="protein sequence ID" value="ABX29198.1"/>
    <property type="molecule type" value="Genomic_DNA"/>
</dbReference>
<dbReference type="RefSeq" id="WP_001015597.1">
    <property type="nucleotide sequence ID" value="NC_010079.1"/>
</dbReference>
<dbReference type="SMR" id="A8Z3T2"/>
<dbReference type="KEGG" id="sax:USA300HOU_1183"/>
<dbReference type="HOGENOM" id="CLU_027562_9_0_9"/>
<dbReference type="GO" id="GO:0005737">
    <property type="term" value="C:cytoplasm"/>
    <property type="evidence" value="ECO:0007669"/>
    <property type="project" value="UniProtKB-SubCell"/>
</dbReference>
<dbReference type="GO" id="GO:0003677">
    <property type="term" value="F:DNA binding"/>
    <property type="evidence" value="ECO:0007669"/>
    <property type="project" value="UniProtKB-KW"/>
</dbReference>
<dbReference type="GO" id="GO:0009037">
    <property type="term" value="F:tyrosine-based site-specific recombinase activity"/>
    <property type="evidence" value="ECO:0007669"/>
    <property type="project" value="UniProtKB-UniRule"/>
</dbReference>
<dbReference type="GO" id="GO:0051301">
    <property type="term" value="P:cell division"/>
    <property type="evidence" value="ECO:0007669"/>
    <property type="project" value="UniProtKB-KW"/>
</dbReference>
<dbReference type="GO" id="GO:0007059">
    <property type="term" value="P:chromosome segregation"/>
    <property type="evidence" value="ECO:0007669"/>
    <property type="project" value="UniProtKB-UniRule"/>
</dbReference>
<dbReference type="GO" id="GO:0006313">
    <property type="term" value="P:DNA transposition"/>
    <property type="evidence" value="ECO:0007669"/>
    <property type="project" value="UniProtKB-UniRule"/>
</dbReference>
<dbReference type="CDD" id="cd00798">
    <property type="entry name" value="INT_XerDC_C"/>
    <property type="match status" value="1"/>
</dbReference>
<dbReference type="Gene3D" id="1.10.150.130">
    <property type="match status" value="1"/>
</dbReference>
<dbReference type="Gene3D" id="1.10.443.10">
    <property type="entry name" value="Intergrase catalytic core"/>
    <property type="match status" value="1"/>
</dbReference>
<dbReference type="HAMAP" id="MF_01808">
    <property type="entry name" value="Recomb_XerC_XerD"/>
    <property type="match status" value="1"/>
</dbReference>
<dbReference type="InterPro" id="IPR044068">
    <property type="entry name" value="CB"/>
</dbReference>
<dbReference type="InterPro" id="IPR011010">
    <property type="entry name" value="DNA_brk_join_enz"/>
</dbReference>
<dbReference type="InterPro" id="IPR013762">
    <property type="entry name" value="Integrase-like_cat_sf"/>
</dbReference>
<dbReference type="InterPro" id="IPR002104">
    <property type="entry name" value="Integrase_catalytic"/>
</dbReference>
<dbReference type="InterPro" id="IPR010998">
    <property type="entry name" value="Integrase_recombinase_N"/>
</dbReference>
<dbReference type="InterPro" id="IPR004107">
    <property type="entry name" value="Integrase_SAM-like_N"/>
</dbReference>
<dbReference type="InterPro" id="IPR011931">
    <property type="entry name" value="Recomb_XerC"/>
</dbReference>
<dbReference type="InterPro" id="IPR023009">
    <property type="entry name" value="Tyrosine_recombinase_XerC/XerD"/>
</dbReference>
<dbReference type="InterPro" id="IPR050090">
    <property type="entry name" value="Tyrosine_recombinase_XerCD"/>
</dbReference>
<dbReference type="NCBIfam" id="NF001399">
    <property type="entry name" value="PRK00283.1"/>
    <property type="match status" value="1"/>
</dbReference>
<dbReference type="NCBIfam" id="NF040815">
    <property type="entry name" value="recomb_XerA_Arch"/>
    <property type="match status" value="1"/>
</dbReference>
<dbReference type="NCBIfam" id="TIGR02224">
    <property type="entry name" value="recomb_XerC"/>
    <property type="match status" value="1"/>
</dbReference>
<dbReference type="PANTHER" id="PTHR30349">
    <property type="entry name" value="PHAGE INTEGRASE-RELATED"/>
    <property type="match status" value="1"/>
</dbReference>
<dbReference type="PANTHER" id="PTHR30349:SF77">
    <property type="entry name" value="TYROSINE RECOMBINASE XERC"/>
    <property type="match status" value="1"/>
</dbReference>
<dbReference type="Pfam" id="PF02899">
    <property type="entry name" value="Phage_int_SAM_1"/>
    <property type="match status" value="1"/>
</dbReference>
<dbReference type="Pfam" id="PF00589">
    <property type="entry name" value="Phage_integrase"/>
    <property type="match status" value="1"/>
</dbReference>
<dbReference type="SUPFAM" id="SSF56349">
    <property type="entry name" value="DNA breaking-rejoining enzymes"/>
    <property type="match status" value="1"/>
</dbReference>
<dbReference type="PROSITE" id="PS51900">
    <property type="entry name" value="CB"/>
    <property type="match status" value="1"/>
</dbReference>
<dbReference type="PROSITE" id="PS51898">
    <property type="entry name" value="TYR_RECOMBINASE"/>
    <property type="match status" value="1"/>
</dbReference>